<sequence>MPKKIIVPVGTSKPIAPFSPGTLADGVVYVSGTLPFDKDNNVVHVGDASAQTRHVLETIKSVIETAGGTMEDVTMNHIFITDWANYQAVNTVYAEYFPGDKPARYCIQCGLVKPDALVEIATVAHIGK</sequence>
<accession>Q7CWX2</accession>
<protein>
    <recommendedName>
        <fullName evidence="1">3-aminoacrylate deaminase RutC</fullName>
        <shortName evidence="1">3-AA deaminase</shortName>
        <ecNumber evidence="1">3.5.-.-</ecNumber>
    </recommendedName>
</protein>
<feature type="chain" id="PRO_0000402710" description="3-aminoacrylate deaminase RutC">
    <location>
        <begin position="1"/>
        <end position="128"/>
    </location>
</feature>
<evidence type="ECO:0000255" key="1">
    <source>
        <dbReference type="HAMAP-Rule" id="MF_00831"/>
    </source>
</evidence>
<dbReference type="EC" id="3.5.-.-" evidence="1"/>
<dbReference type="EMBL" id="AE007869">
    <property type="protein sequence ID" value="AAK88230.2"/>
    <property type="molecule type" value="Genomic_DNA"/>
</dbReference>
<dbReference type="RefSeq" id="NP_355445.2">
    <property type="nucleotide sequence ID" value="NC_003062.2"/>
</dbReference>
<dbReference type="RefSeq" id="WP_004443491.1">
    <property type="nucleotide sequence ID" value="NC_003062.2"/>
</dbReference>
<dbReference type="SMR" id="Q7CWX2"/>
<dbReference type="STRING" id="176299.Atu2498"/>
<dbReference type="EnsemblBacteria" id="AAK88230">
    <property type="protein sequence ID" value="AAK88230"/>
    <property type="gene ID" value="Atu2498"/>
</dbReference>
<dbReference type="GeneID" id="1134536"/>
<dbReference type="KEGG" id="atu:Atu2498"/>
<dbReference type="PATRIC" id="fig|176299.10.peg.2510"/>
<dbReference type="eggNOG" id="COG0251">
    <property type="taxonomic scope" value="Bacteria"/>
</dbReference>
<dbReference type="HOGENOM" id="CLU_100715_7_3_5"/>
<dbReference type="OrthoDB" id="583118at2"/>
<dbReference type="PhylomeDB" id="Q7CWX2"/>
<dbReference type="BioCyc" id="AGRO:ATU2498-MONOMER"/>
<dbReference type="Proteomes" id="UP000000813">
    <property type="component" value="Chromosome circular"/>
</dbReference>
<dbReference type="GO" id="GO:0005829">
    <property type="term" value="C:cytosol"/>
    <property type="evidence" value="ECO:0007669"/>
    <property type="project" value="TreeGrafter"/>
</dbReference>
<dbReference type="GO" id="GO:0019239">
    <property type="term" value="F:deaminase activity"/>
    <property type="evidence" value="ECO:0007669"/>
    <property type="project" value="TreeGrafter"/>
</dbReference>
<dbReference type="GO" id="GO:0019740">
    <property type="term" value="P:nitrogen utilization"/>
    <property type="evidence" value="ECO:0007669"/>
    <property type="project" value="UniProtKB-UniRule"/>
</dbReference>
<dbReference type="GO" id="GO:0006212">
    <property type="term" value="P:uracil catabolic process"/>
    <property type="evidence" value="ECO:0007669"/>
    <property type="project" value="UniProtKB-UniRule"/>
</dbReference>
<dbReference type="CDD" id="cd00448">
    <property type="entry name" value="YjgF_YER057c_UK114_family"/>
    <property type="match status" value="1"/>
</dbReference>
<dbReference type="Gene3D" id="3.30.1330.40">
    <property type="entry name" value="RutC-like"/>
    <property type="match status" value="1"/>
</dbReference>
<dbReference type="HAMAP" id="MF_00831">
    <property type="entry name" value="RutC"/>
    <property type="match status" value="1"/>
</dbReference>
<dbReference type="InterPro" id="IPR019898">
    <property type="entry name" value="RutC"/>
</dbReference>
<dbReference type="InterPro" id="IPR035959">
    <property type="entry name" value="RutC-like_sf"/>
</dbReference>
<dbReference type="InterPro" id="IPR006175">
    <property type="entry name" value="YjgF/YER057c/UK114"/>
</dbReference>
<dbReference type="NCBIfam" id="TIGR03610">
    <property type="entry name" value="RutC"/>
    <property type="match status" value="1"/>
</dbReference>
<dbReference type="PANTHER" id="PTHR11803">
    <property type="entry name" value="2-IMINOBUTANOATE/2-IMINOPROPANOATE DEAMINASE RIDA"/>
    <property type="match status" value="1"/>
</dbReference>
<dbReference type="PANTHER" id="PTHR11803:SF58">
    <property type="entry name" value="PROTEIN HMF1-RELATED"/>
    <property type="match status" value="1"/>
</dbReference>
<dbReference type="Pfam" id="PF01042">
    <property type="entry name" value="Ribonuc_L-PSP"/>
    <property type="match status" value="1"/>
</dbReference>
<dbReference type="SUPFAM" id="SSF55298">
    <property type="entry name" value="YjgF-like"/>
    <property type="match status" value="1"/>
</dbReference>
<proteinExistence type="inferred from homology"/>
<keyword id="KW-0378">Hydrolase</keyword>
<keyword id="KW-1185">Reference proteome</keyword>
<comment type="function">
    <text evidence="1">Involved in pyrimidine catabolism. Catalyzes the deamination of 3-aminoacrylate to malonic semialdehyde, a reaction that can also occur spontaneously. RutC may facilitate the reaction and modulate the metabolic fitness, rather than catalyzing essential functions.</text>
</comment>
<comment type="catalytic activity">
    <reaction evidence="1">
        <text>(Z)-3-aminoacrylate + H2O + H(+) = 3-oxopropanoate + NH4(+)</text>
        <dbReference type="Rhea" id="RHEA:34947"/>
        <dbReference type="ChEBI" id="CHEBI:15377"/>
        <dbReference type="ChEBI" id="CHEBI:15378"/>
        <dbReference type="ChEBI" id="CHEBI:28938"/>
        <dbReference type="ChEBI" id="CHEBI:33190"/>
        <dbReference type="ChEBI" id="CHEBI:59894"/>
    </reaction>
</comment>
<comment type="similarity">
    <text evidence="1">Belongs to the RutC family.</text>
</comment>
<organism>
    <name type="scientific">Agrobacterium fabrum (strain C58 / ATCC 33970)</name>
    <name type="common">Agrobacterium tumefaciens (strain C58)</name>
    <dbReference type="NCBI Taxonomy" id="176299"/>
    <lineage>
        <taxon>Bacteria</taxon>
        <taxon>Pseudomonadati</taxon>
        <taxon>Pseudomonadota</taxon>
        <taxon>Alphaproteobacteria</taxon>
        <taxon>Hyphomicrobiales</taxon>
        <taxon>Rhizobiaceae</taxon>
        <taxon>Rhizobium/Agrobacterium group</taxon>
        <taxon>Agrobacterium</taxon>
        <taxon>Agrobacterium tumefaciens complex</taxon>
    </lineage>
</organism>
<name>RUTC_AGRFC</name>
<reference key="1">
    <citation type="journal article" date="2001" name="Science">
        <title>The genome of the natural genetic engineer Agrobacterium tumefaciens C58.</title>
        <authorList>
            <person name="Wood D.W."/>
            <person name="Setubal J.C."/>
            <person name="Kaul R."/>
            <person name="Monks D.E."/>
            <person name="Kitajima J.P."/>
            <person name="Okura V.K."/>
            <person name="Zhou Y."/>
            <person name="Chen L."/>
            <person name="Wood G.E."/>
            <person name="Almeida N.F. Jr."/>
            <person name="Woo L."/>
            <person name="Chen Y."/>
            <person name="Paulsen I.T."/>
            <person name="Eisen J.A."/>
            <person name="Karp P.D."/>
            <person name="Bovee D. Sr."/>
            <person name="Chapman P."/>
            <person name="Clendenning J."/>
            <person name="Deatherage G."/>
            <person name="Gillet W."/>
            <person name="Grant C."/>
            <person name="Kutyavin T."/>
            <person name="Levy R."/>
            <person name="Li M.-J."/>
            <person name="McClelland E."/>
            <person name="Palmieri A."/>
            <person name="Raymond C."/>
            <person name="Rouse G."/>
            <person name="Saenphimmachak C."/>
            <person name="Wu Z."/>
            <person name="Romero P."/>
            <person name="Gordon D."/>
            <person name="Zhang S."/>
            <person name="Yoo H."/>
            <person name="Tao Y."/>
            <person name="Biddle P."/>
            <person name="Jung M."/>
            <person name="Krespan W."/>
            <person name="Perry M."/>
            <person name="Gordon-Kamm B."/>
            <person name="Liao L."/>
            <person name="Kim S."/>
            <person name="Hendrick C."/>
            <person name="Zhao Z.-Y."/>
            <person name="Dolan M."/>
            <person name="Chumley F."/>
            <person name="Tingey S.V."/>
            <person name="Tomb J.-F."/>
            <person name="Gordon M.P."/>
            <person name="Olson M.V."/>
            <person name="Nester E.W."/>
        </authorList>
    </citation>
    <scope>NUCLEOTIDE SEQUENCE [LARGE SCALE GENOMIC DNA]</scope>
    <source>
        <strain>C58 / ATCC 33970</strain>
    </source>
</reference>
<reference key="2">
    <citation type="journal article" date="2001" name="Science">
        <title>Genome sequence of the plant pathogen and biotechnology agent Agrobacterium tumefaciens C58.</title>
        <authorList>
            <person name="Goodner B."/>
            <person name="Hinkle G."/>
            <person name="Gattung S."/>
            <person name="Miller N."/>
            <person name="Blanchard M."/>
            <person name="Qurollo B."/>
            <person name="Goldman B.S."/>
            <person name="Cao Y."/>
            <person name="Askenazi M."/>
            <person name="Halling C."/>
            <person name="Mullin L."/>
            <person name="Houmiel K."/>
            <person name="Gordon J."/>
            <person name="Vaudin M."/>
            <person name="Iartchouk O."/>
            <person name="Epp A."/>
            <person name="Liu F."/>
            <person name="Wollam C."/>
            <person name="Allinger M."/>
            <person name="Doughty D."/>
            <person name="Scott C."/>
            <person name="Lappas C."/>
            <person name="Markelz B."/>
            <person name="Flanagan C."/>
            <person name="Crowell C."/>
            <person name="Gurson J."/>
            <person name="Lomo C."/>
            <person name="Sear C."/>
            <person name="Strub G."/>
            <person name="Cielo C."/>
            <person name="Slater S."/>
        </authorList>
    </citation>
    <scope>NUCLEOTIDE SEQUENCE [LARGE SCALE GENOMIC DNA]</scope>
    <source>
        <strain>C58 / ATCC 33970</strain>
    </source>
</reference>
<gene>
    <name evidence="1" type="primary">rutC</name>
    <name type="ordered locus">Atu2498</name>
    <name type="ORF">AGR_C_4539</name>
</gene>